<evidence type="ECO:0000255" key="1">
    <source>
        <dbReference type="HAMAP-Rule" id="MF_01227"/>
    </source>
</evidence>
<gene>
    <name evidence="1" type="primary">pyrG</name>
    <name type="ordered locus">STH40</name>
</gene>
<name>PYRG_SYMTH</name>
<organism>
    <name type="scientific">Symbiobacterium thermophilum (strain DSM 24528 / JCM 14929 / IAM 14863 / T)</name>
    <dbReference type="NCBI Taxonomy" id="292459"/>
    <lineage>
        <taxon>Bacteria</taxon>
        <taxon>Bacillati</taxon>
        <taxon>Bacillota</taxon>
        <taxon>Clostridia</taxon>
        <taxon>Eubacteriales</taxon>
        <taxon>Symbiobacteriaceae</taxon>
        <taxon>Symbiobacterium</taxon>
    </lineage>
</organism>
<dbReference type="EC" id="6.3.4.2" evidence="1"/>
<dbReference type="EMBL" id="AP006840">
    <property type="protein sequence ID" value="BAD39025.1"/>
    <property type="molecule type" value="Genomic_DNA"/>
</dbReference>
<dbReference type="RefSeq" id="WP_011194175.1">
    <property type="nucleotide sequence ID" value="NC_006177.1"/>
</dbReference>
<dbReference type="SMR" id="Q67TG8"/>
<dbReference type="STRING" id="292459.STH40"/>
<dbReference type="KEGG" id="sth:STH40"/>
<dbReference type="eggNOG" id="COG0504">
    <property type="taxonomic scope" value="Bacteria"/>
</dbReference>
<dbReference type="HOGENOM" id="CLU_011675_5_0_9"/>
<dbReference type="OrthoDB" id="9801107at2"/>
<dbReference type="UniPathway" id="UPA00159">
    <property type="reaction ID" value="UER00277"/>
</dbReference>
<dbReference type="Proteomes" id="UP000000417">
    <property type="component" value="Chromosome"/>
</dbReference>
<dbReference type="GO" id="GO:0005829">
    <property type="term" value="C:cytosol"/>
    <property type="evidence" value="ECO:0007669"/>
    <property type="project" value="TreeGrafter"/>
</dbReference>
<dbReference type="GO" id="GO:0005524">
    <property type="term" value="F:ATP binding"/>
    <property type="evidence" value="ECO:0007669"/>
    <property type="project" value="UniProtKB-KW"/>
</dbReference>
<dbReference type="GO" id="GO:0003883">
    <property type="term" value="F:CTP synthase activity"/>
    <property type="evidence" value="ECO:0007669"/>
    <property type="project" value="UniProtKB-UniRule"/>
</dbReference>
<dbReference type="GO" id="GO:0004359">
    <property type="term" value="F:glutaminase activity"/>
    <property type="evidence" value="ECO:0007669"/>
    <property type="project" value="RHEA"/>
</dbReference>
<dbReference type="GO" id="GO:0042802">
    <property type="term" value="F:identical protein binding"/>
    <property type="evidence" value="ECO:0007669"/>
    <property type="project" value="TreeGrafter"/>
</dbReference>
<dbReference type="GO" id="GO:0046872">
    <property type="term" value="F:metal ion binding"/>
    <property type="evidence" value="ECO:0007669"/>
    <property type="project" value="UniProtKB-KW"/>
</dbReference>
<dbReference type="GO" id="GO:0044210">
    <property type="term" value="P:'de novo' CTP biosynthetic process"/>
    <property type="evidence" value="ECO:0007669"/>
    <property type="project" value="UniProtKB-UniRule"/>
</dbReference>
<dbReference type="GO" id="GO:0019856">
    <property type="term" value="P:pyrimidine nucleobase biosynthetic process"/>
    <property type="evidence" value="ECO:0007669"/>
    <property type="project" value="TreeGrafter"/>
</dbReference>
<dbReference type="CDD" id="cd03113">
    <property type="entry name" value="CTPS_N"/>
    <property type="match status" value="1"/>
</dbReference>
<dbReference type="CDD" id="cd01746">
    <property type="entry name" value="GATase1_CTP_Synthase"/>
    <property type="match status" value="1"/>
</dbReference>
<dbReference type="FunFam" id="3.40.50.300:FF:000009">
    <property type="entry name" value="CTP synthase"/>
    <property type="match status" value="1"/>
</dbReference>
<dbReference type="FunFam" id="3.40.50.880:FF:000002">
    <property type="entry name" value="CTP synthase"/>
    <property type="match status" value="1"/>
</dbReference>
<dbReference type="Gene3D" id="3.40.50.880">
    <property type="match status" value="1"/>
</dbReference>
<dbReference type="Gene3D" id="3.40.50.300">
    <property type="entry name" value="P-loop containing nucleotide triphosphate hydrolases"/>
    <property type="match status" value="1"/>
</dbReference>
<dbReference type="HAMAP" id="MF_01227">
    <property type="entry name" value="PyrG"/>
    <property type="match status" value="1"/>
</dbReference>
<dbReference type="InterPro" id="IPR029062">
    <property type="entry name" value="Class_I_gatase-like"/>
</dbReference>
<dbReference type="InterPro" id="IPR004468">
    <property type="entry name" value="CTP_synthase"/>
</dbReference>
<dbReference type="InterPro" id="IPR017456">
    <property type="entry name" value="CTP_synthase_N"/>
</dbReference>
<dbReference type="InterPro" id="IPR017926">
    <property type="entry name" value="GATASE"/>
</dbReference>
<dbReference type="InterPro" id="IPR033828">
    <property type="entry name" value="GATase1_CTP_Synthase"/>
</dbReference>
<dbReference type="InterPro" id="IPR027417">
    <property type="entry name" value="P-loop_NTPase"/>
</dbReference>
<dbReference type="NCBIfam" id="NF003792">
    <property type="entry name" value="PRK05380.1"/>
    <property type="match status" value="1"/>
</dbReference>
<dbReference type="NCBIfam" id="TIGR00337">
    <property type="entry name" value="PyrG"/>
    <property type="match status" value="1"/>
</dbReference>
<dbReference type="PANTHER" id="PTHR11550">
    <property type="entry name" value="CTP SYNTHASE"/>
    <property type="match status" value="1"/>
</dbReference>
<dbReference type="PANTHER" id="PTHR11550:SF0">
    <property type="entry name" value="CTP SYNTHASE-RELATED"/>
    <property type="match status" value="1"/>
</dbReference>
<dbReference type="Pfam" id="PF06418">
    <property type="entry name" value="CTP_synth_N"/>
    <property type="match status" value="1"/>
</dbReference>
<dbReference type="Pfam" id="PF00117">
    <property type="entry name" value="GATase"/>
    <property type="match status" value="1"/>
</dbReference>
<dbReference type="SUPFAM" id="SSF52317">
    <property type="entry name" value="Class I glutamine amidotransferase-like"/>
    <property type="match status" value="1"/>
</dbReference>
<dbReference type="SUPFAM" id="SSF52540">
    <property type="entry name" value="P-loop containing nucleoside triphosphate hydrolases"/>
    <property type="match status" value="1"/>
</dbReference>
<dbReference type="PROSITE" id="PS51273">
    <property type="entry name" value="GATASE_TYPE_1"/>
    <property type="match status" value="1"/>
</dbReference>
<keyword id="KW-0067">ATP-binding</keyword>
<keyword id="KW-0315">Glutamine amidotransferase</keyword>
<keyword id="KW-0436">Ligase</keyword>
<keyword id="KW-0460">Magnesium</keyword>
<keyword id="KW-0479">Metal-binding</keyword>
<keyword id="KW-0547">Nucleotide-binding</keyword>
<keyword id="KW-0665">Pyrimidine biosynthesis</keyword>
<keyword id="KW-1185">Reference proteome</keyword>
<sequence>MAKFIFITGGVVSGLGKGITAASLGRLIKSRGYRVTALKFDPYLNVDPGTMSPIQHGEVFVTEDGGECDLDVGHYERFMDVNMGKGNNVTTGKIYSSVIAKERRGDYLGGTVQVIPHITNEIKSHIRRVAEDSDADVILVEIGGTVGDIEGQPFLEAIRQFKNEVPSKDDVLFIHVTLVPYIAASGELKTKPTQHSVRELRSIGIQPDVIVCRSDREIPKDLREKIALFCDVPPEAVIPNEDLGSLYEVPLAMEKEGLAEIVCRRLGLDSRTPDLAEWEALVQRAKHPEREVEIALVGKYVALEDAYLSVVESLNHAGIHNNARVRIHWVDSEKLENGITPEALEACLGRADGILVPGGFGYRGIEGKINAIRYAREKGIPFFGICMGMQSAVIEAARNLLGLSKANSTEFVTDCKDPVIDMMAQQKQVTDLGGTMRLGAFPCRLKPGSKAHAAYGTEVVHERHRHRFEVNNAYLERLEAVGLKAVGVWPEGNLVEVVEMEGHPWFVGVQFHPEFKSRPNRPHPLFRDFIKAALEYRAGKK</sequence>
<proteinExistence type="inferred from homology"/>
<reference key="1">
    <citation type="journal article" date="2004" name="Nucleic Acids Res.">
        <title>Genome sequence of Symbiobacterium thermophilum, an uncultivable bacterium that depends on microbial commensalism.</title>
        <authorList>
            <person name="Ueda K."/>
            <person name="Yamashita A."/>
            <person name="Ishikawa J."/>
            <person name="Shimada M."/>
            <person name="Watsuji T."/>
            <person name="Morimura K."/>
            <person name="Ikeda H."/>
            <person name="Hattori M."/>
            <person name="Beppu T."/>
        </authorList>
    </citation>
    <scope>NUCLEOTIDE SEQUENCE [LARGE SCALE GENOMIC DNA]</scope>
    <source>
        <strain>DSM 24528 / JCM 14929 / IAM 14863 / T</strain>
    </source>
</reference>
<protein>
    <recommendedName>
        <fullName evidence="1">CTP synthase</fullName>
        <ecNumber evidence="1">6.3.4.2</ecNumber>
    </recommendedName>
    <alternativeName>
        <fullName evidence="1">Cytidine 5'-triphosphate synthase</fullName>
    </alternativeName>
    <alternativeName>
        <fullName evidence="1">Cytidine triphosphate synthetase</fullName>
        <shortName evidence="1">CTP synthetase</shortName>
        <shortName evidence="1">CTPS</shortName>
    </alternativeName>
    <alternativeName>
        <fullName evidence="1">UTP--ammonia ligase</fullName>
    </alternativeName>
</protein>
<feature type="chain" id="PRO_0000266239" description="CTP synthase">
    <location>
        <begin position="1"/>
        <end position="541"/>
    </location>
</feature>
<feature type="domain" description="Glutamine amidotransferase type-1" evidence="1">
    <location>
        <begin position="293"/>
        <end position="539"/>
    </location>
</feature>
<feature type="region of interest" description="Amidoligase domain" evidence="1">
    <location>
        <begin position="1"/>
        <end position="268"/>
    </location>
</feature>
<feature type="active site" description="Nucleophile; for glutamine hydrolysis" evidence="1">
    <location>
        <position position="386"/>
    </location>
</feature>
<feature type="active site" evidence="1">
    <location>
        <position position="512"/>
    </location>
</feature>
<feature type="active site" evidence="1">
    <location>
        <position position="514"/>
    </location>
</feature>
<feature type="binding site" evidence="1">
    <location>
        <position position="13"/>
    </location>
    <ligand>
        <name>CTP</name>
        <dbReference type="ChEBI" id="CHEBI:37563"/>
        <note>allosteric inhibitor</note>
    </ligand>
</feature>
<feature type="binding site" evidence="1">
    <location>
        <position position="13"/>
    </location>
    <ligand>
        <name>UTP</name>
        <dbReference type="ChEBI" id="CHEBI:46398"/>
    </ligand>
</feature>
<feature type="binding site" evidence="1">
    <location>
        <begin position="14"/>
        <end position="19"/>
    </location>
    <ligand>
        <name>ATP</name>
        <dbReference type="ChEBI" id="CHEBI:30616"/>
    </ligand>
</feature>
<feature type="binding site" evidence="1">
    <location>
        <position position="71"/>
    </location>
    <ligand>
        <name>ATP</name>
        <dbReference type="ChEBI" id="CHEBI:30616"/>
    </ligand>
</feature>
<feature type="binding site" evidence="1">
    <location>
        <position position="71"/>
    </location>
    <ligand>
        <name>Mg(2+)</name>
        <dbReference type="ChEBI" id="CHEBI:18420"/>
    </ligand>
</feature>
<feature type="binding site" evidence="1">
    <location>
        <position position="141"/>
    </location>
    <ligand>
        <name>Mg(2+)</name>
        <dbReference type="ChEBI" id="CHEBI:18420"/>
    </ligand>
</feature>
<feature type="binding site" evidence="1">
    <location>
        <begin position="148"/>
        <end position="150"/>
    </location>
    <ligand>
        <name>CTP</name>
        <dbReference type="ChEBI" id="CHEBI:37563"/>
        <note>allosteric inhibitor</note>
    </ligand>
</feature>
<feature type="binding site" evidence="1">
    <location>
        <begin position="189"/>
        <end position="194"/>
    </location>
    <ligand>
        <name>CTP</name>
        <dbReference type="ChEBI" id="CHEBI:37563"/>
        <note>allosteric inhibitor</note>
    </ligand>
</feature>
<feature type="binding site" evidence="1">
    <location>
        <begin position="189"/>
        <end position="194"/>
    </location>
    <ligand>
        <name>UTP</name>
        <dbReference type="ChEBI" id="CHEBI:46398"/>
    </ligand>
</feature>
<feature type="binding site" evidence="1">
    <location>
        <position position="225"/>
    </location>
    <ligand>
        <name>CTP</name>
        <dbReference type="ChEBI" id="CHEBI:37563"/>
        <note>allosteric inhibitor</note>
    </ligand>
</feature>
<feature type="binding site" evidence="1">
    <location>
        <position position="225"/>
    </location>
    <ligand>
        <name>UTP</name>
        <dbReference type="ChEBI" id="CHEBI:46398"/>
    </ligand>
</feature>
<feature type="binding site" evidence="1">
    <location>
        <position position="359"/>
    </location>
    <ligand>
        <name>L-glutamine</name>
        <dbReference type="ChEBI" id="CHEBI:58359"/>
    </ligand>
</feature>
<feature type="binding site" evidence="1">
    <location>
        <begin position="387"/>
        <end position="390"/>
    </location>
    <ligand>
        <name>L-glutamine</name>
        <dbReference type="ChEBI" id="CHEBI:58359"/>
    </ligand>
</feature>
<feature type="binding site" evidence="1">
    <location>
        <position position="410"/>
    </location>
    <ligand>
        <name>L-glutamine</name>
        <dbReference type="ChEBI" id="CHEBI:58359"/>
    </ligand>
</feature>
<feature type="binding site" evidence="1">
    <location>
        <position position="467"/>
    </location>
    <ligand>
        <name>L-glutamine</name>
        <dbReference type="ChEBI" id="CHEBI:58359"/>
    </ligand>
</feature>
<comment type="function">
    <text evidence="1">Catalyzes the ATP-dependent amination of UTP to CTP with either L-glutamine or ammonia as the source of nitrogen. Regulates intracellular CTP levels through interactions with the four ribonucleotide triphosphates.</text>
</comment>
<comment type="catalytic activity">
    <reaction evidence="1">
        <text>UTP + L-glutamine + ATP + H2O = CTP + L-glutamate + ADP + phosphate + 2 H(+)</text>
        <dbReference type="Rhea" id="RHEA:26426"/>
        <dbReference type="ChEBI" id="CHEBI:15377"/>
        <dbReference type="ChEBI" id="CHEBI:15378"/>
        <dbReference type="ChEBI" id="CHEBI:29985"/>
        <dbReference type="ChEBI" id="CHEBI:30616"/>
        <dbReference type="ChEBI" id="CHEBI:37563"/>
        <dbReference type="ChEBI" id="CHEBI:43474"/>
        <dbReference type="ChEBI" id="CHEBI:46398"/>
        <dbReference type="ChEBI" id="CHEBI:58359"/>
        <dbReference type="ChEBI" id="CHEBI:456216"/>
        <dbReference type="EC" id="6.3.4.2"/>
    </reaction>
</comment>
<comment type="catalytic activity">
    <reaction evidence="1">
        <text>L-glutamine + H2O = L-glutamate + NH4(+)</text>
        <dbReference type="Rhea" id="RHEA:15889"/>
        <dbReference type="ChEBI" id="CHEBI:15377"/>
        <dbReference type="ChEBI" id="CHEBI:28938"/>
        <dbReference type="ChEBI" id="CHEBI:29985"/>
        <dbReference type="ChEBI" id="CHEBI:58359"/>
    </reaction>
</comment>
<comment type="catalytic activity">
    <reaction evidence="1">
        <text>UTP + NH4(+) + ATP = CTP + ADP + phosphate + 2 H(+)</text>
        <dbReference type="Rhea" id="RHEA:16597"/>
        <dbReference type="ChEBI" id="CHEBI:15378"/>
        <dbReference type="ChEBI" id="CHEBI:28938"/>
        <dbReference type="ChEBI" id="CHEBI:30616"/>
        <dbReference type="ChEBI" id="CHEBI:37563"/>
        <dbReference type="ChEBI" id="CHEBI:43474"/>
        <dbReference type="ChEBI" id="CHEBI:46398"/>
        <dbReference type="ChEBI" id="CHEBI:456216"/>
    </reaction>
</comment>
<comment type="activity regulation">
    <text evidence="1">Allosterically activated by GTP, when glutamine is the substrate; GTP has no effect on the reaction when ammonia is the substrate. The allosteric effector GTP functions by stabilizing the protein conformation that binds the tetrahedral intermediate(s) formed during glutamine hydrolysis. Inhibited by the product CTP, via allosteric rather than competitive inhibition.</text>
</comment>
<comment type="pathway">
    <text evidence="1">Pyrimidine metabolism; CTP biosynthesis via de novo pathway; CTP from UDP: step 2/2.</text>
</comment>
<comment type="subunit">
    <text evidence="1">Homotetramer.</text>
</comment>
<comment type="miscellaneous">
    <text evidence="1">CTPSs have evolved a hybrid strategy for distinguishing between UTP and CTP. The overlapping regions of the product feedback inhibitory and substrate sites recognize a common feature in both compounds, the triphosphate moiety. To differentiate isosteric substrate and product pyrimidine rings, an additional pocket far from the expected kinase/ligase catalytic site, specifically recognizes the cytosine and ribose portions of the product inhibitor.</text>
</comment>
<comment type="similarity">
    <text evidence="1">Belongs to the CTP synthase family.</text>
</comment>
<accession>Q67TG8</accession>